<name>ILVC_SACI7</name>
<sequence>MKSTSKIYTDKDSNLDVIKGKRIAVLGYGSQGRAWAQNLRDSGLNVVVGLEREGKSWELAKSDGIIPLHTKDAVKDADIIVFLVPDMVQRTLWLESVQPYMKKGADLVFAHGFNIHYKLIEPPKDSDVYMIAPKGPGPTVREYYKAGGGVPALVAIQQDVSGTALQKALAIAKGIGATRAGVIPTTFKEETETDLFGEQVILVGGIMELMKAAFETLVEEGYQPEVAYFETINELKMLVDLVYEKGITGMLKAVSDTAKYGGMTVGKFVINEDVRKRMKEALQRIKSGKFAEEWVEEYGRGMPTVVNGLSQVQNSLEEKIGNQLKDLIQKGKPKS</sequence>
<feature type="chain" id="PRO_1000206093" description="Ketol-acid reductoisomerase (NADP(+))">
    <location>
        <begin position="1"/>
        <end position="335"/>
    </location>
</feature>
<feature type="domain" description="KARI N-terminal Rossmann" evidence="2">
    <location>
        <begin position="5"/>
        <end position="185"/>
    </location>
</feature>
<feature type="domain" description="KARI C-terminal knotted" evidence="3">
    <location>
        <begin position="186"/>
        <end position="331"/>
    </location>
</feature>
<feature type="active site" evidence="1">
    <location>
        <position position="111"/>
    </location>
</feature>
<feature type="binding site" evidence="1">
    <location>
        <begin position="28"/>
        <end position="31"/>
    </location>
    <ligand>
        <name>NADP(+)</name>
        <dbReference type="ChEBI" id="CHEBI:58349"/>
    </ligand>
</feature>
<feature type="binding site" evidence="1">
    <location>
        <position position="56"/>
    </location>
    <ligand>
        <name>NADP(+)</name>
        <dbReference type="ChEBI" id="CHEBI:58349"/>
    </ligand>
</feature>
<feature type="binding site" evidence="1">
    <location>
        <begin position="86"/>
        <end position="89"/>
    </location>
    <ligand>
        <name>NADP(+)</name>
        <dbReference type="ChEBI" id="CHEBI:58349"/>
    </ligand>
</feature>
<feature type="binding site" evidence="1">
    <location>
        <position position="137"/>
    </location>
    <ligand>
        <name>NADP(+)</name>
        <dbReference type="ChEBI" id="CHEBI:58349"/>
    </ligand>
</feature>
<feature type="binding site" evidence="1">
    <location>
        <position position="194"/>
    </location>
    <ligand>
        <name>Mg(2+)</name>
        <dbReference type="ChEBI" id="CHEBI:18420"/>
        <label>1</label>
    </ligand>
</feature>
<feature type="binding site" evidence="1">
    <location>
        <position position="194"/>
    </location>
    <ligand>
        <name>Mg(2+)</name>
        <dbReference type="ChEBI" id="CHEBI:18420"/>
        <label>2</label>
    </ligand>
</feature>
<feature type="binding site" evidence="1">
    <location>
        <position position="198"/>
    </location>
    <ligand>
        <name>Mg(2+)</name>
        <dbReference type="ChEBI" id="CHEBI:18420"/>
        <label>1</label>
    </ligand>
</feature>
<feature type="binding site" evidence="1">
    <location>
        <position position="230"/>
    </location>
    <ligand>
        <name>Mg(2+)</name>
        <dbReference type="ChEBI" id="CHEBI:18420"/>
        <label>2</label>
    </ligand>
</feature>
<feature type="binding site" evidence="1">
    <location>
        <position position="234"/>
    </location>
    <ligand>
        <name>Mg(2+)</name>
        <dbReference type="ChEBI" id="CHEBI:18420"/>
        <label>2</label>
    </ligand>
</feature>
<feature type="binding site" evidence="1">
    <location>
        <position position="255"/>
    </location>
    <ligand>
        <name>substrate</name>
    </ligand>
</feature>
<evidence type="ECO:0000255" key="1">
    <source>
        <dbReference type="HAMAP-Rule" id="MF_00435"/>
    </source>
</evidence>
<evidence type="ECO:0000255" key="2">
    <source>
        <dbReference type="PROSITE-ProRule" id="PRU01197"/>
    </source>
</evidence>
<evidence type="ECO:0000255" key="3">
    <source>
        <dbReference type="PROSITE-ProRule" id="PRU01198"/>
    </source>
</evidence>
<dbReference type="EC" id="1.1.1.86" evidence="1"/>
<dbReference type="EMBL" id="CP001403">
    <property type="protein sequence ID" value="ACP45821.1"/>
    <property type="molecule type" value="Genomic_DNA"/>
</dbReference>
<dbReference type="RefSeq" id="WP_012716220.1">
    <property type="nucleotide sequence ID" value="NC_012622.1"/>
</dbReference>
<dbReference type="SMR" id="C3NET2"/>
<dbReference type="GeneID" id="7808043"/>
<dbReference type="KEGG" id="siy:YG5714_1559"/>
<dbReference type="HOGENOM" id="CLU_033821_0_1_2"/>
<dbReference type="UniPathway" id="UPA00047">
    <property type="reaction ID" value="UER00056"/>
</dbReference>
<dbReference type="UniPathway" id="UPA00049">
    <property type="reaction ID" value="UER00060"/>
</dbReference>
<dbReference type="Proteomes" id="UP000002308">
    <property type="component" value="Chromosome"/>
</dbReference>
<dbReference type="GO" id="GO:0004455">
    <property type="term" value="F:ketol-acid reductoisomerase activity"/>
    <property type="evidence" value="ECO:0007669"/>
    <property type="project" value="UniProtKB-UniRule"/>
</dbReference>
<dbReference type="GO" id="GO:0000287">
    <property type="term" value="F:magnesium ion binding"/>
    <property type="evidence" value="ECO:0007669"/>
    <property type="project" value="UniProtKB-UniRule"/>
</dbReference>
<dbReference type="GO" id="GO:0050661">
    <property type="term" value="F:NADP binding"/>
    <property type="evidence" value="ECO:0007669"/>
    <property type="project" value="InterPro"/>
</dbReference>
<dbReference type="GO" id="GO:0009097">
    <property type="term" value="P:isoleucine biosynthetic process"/>
    <property type="evidence" value="ECO:0007669"/>
    <property type="project" value="UniProtKB-UniRule"/>
</dbReference>
<dbReference type="GO" id="GO:0009099">
    <property type="term" value="P:L-valine biosynthetic process"/>
    <property type="evidence" value="ECO:0007669"/>
    <property type="project" value="UniProtKB-UniRule"/>
</dbReference>
<dbReference type="FunFam" id="3.40.50.720:FF:000023">
    <property type="entry name" value="Ketol-acid reductoisomerase (NADP(+))"/>
    <property type="match status" value="1"/>
</dbReference>
<dbReference type="Gene3D" id="6.10.240.10">
    <property type="match status" value="1"/>
</dbReference>
<dbReference type="Gene3D" id="3.40.50.720">
    <property type="entry name" value="NAD(P)-binding Rossmann-like Domain"/>
    <property type="match status" value="1"/>
</dbReference>
<dbReference type="HAMAP" id="MF_00435">
    <property type="entry name" value="IlvC"/>
    <property type="match status" value="1"/>
</dbReference>
<dbReference type="InterPro" id="IPR008927">
    <property type="entry name" value="6-PGluconate_DH-like_C_sf"/>
</dbReference>
<dbReference type="InterPro" id="IPR013023">
    <property type="entry name" value="KARI"/>
</dbReference>
<dbReference type="InterPro" id="IPR000506">
    <property type="entry name" value="KARI_C"/>
</dbReference>
<dbReference type="InterPro" id="IPR013116">
    <property type="entry name" value="KARI_N"/>
</dbReference>
<dbReference type="InterPro" id="IPR014359">
    <property type="entry name" value="KARI_prok"/>
</dbReference>
<dbReference type="InterPro" id="IPR036291">
    <property type="entry name" value="NAD(P)-bd_dom_sf"/>
</dbReference>
<dbReference type="NCBIfam" id="TIGR00465">
    <property type="entry name" value="ilvC"/>
    <property type="match status" value="1"/>
</dbReference>
<dbReference type="NCBIfam" id="NF004017">
    <property type="entry name" value="PRK05479.1"/>
    <property type="match status" value="1"/>
</dbReference>
<dbReference type="PANTHER" id="PTHR21371">
    <property type="entry name" value="KETOL-ACID REDUCTOISOMERASE, MITOCHONDRIAL"/>
    <property type="match status" value="1"/>
</dbReference>
<dbReference type="PANTHER" id="PTHR21371:SF1">
    <property type="entry name" value="KETOL-ACID REDUCTOISOMERASE, MITOCHONDRIAL"/>
    <property type="match status" value="1"/>
</dbReference>
<dbReference type="Pfam" id="PF01450">
    <property type="entry name" value="KARI_C"/>
    <property type="match status" value="1"/>
</dbReference>
<dbReference type="Pfam" id="PF07991">
    <property type="entry name" value="KARI_N"/>
    <property type="match status" value="1"/>
</dbReference>
<dbReference type="PIRSF" id="PIRSF000116">
    <property type="entry name" value="IlvC_gammaproteo"/>
    <property type="match status" value="1"/>
</dbReference>
<dbReference type="SUPFAM" id="SSF48179">
    <property type="entry name" value="6-phosphogluconate dehydrogenase C-terminal domain-like"/>
    <property type="match status" value="1"/>
</dbReference>
<dbReference type="SUPFAM" id="SSF51735">
    <property type="entry name" value="NAD(P)-binding Rossmann-fold domains"/>
    <property type="match status" value="1"/>
</dbReference>
<dbReference type="PROSITE" id="PS51851">
    <property type="entry name" value="KARI_C"/>
    <property type="match status" value="1"/>
</dbReference>
<dbReference type="PROSITE" id="PS51850">
    <property type="entry name" value="KARI_N"/>
    <property type="match status" value="1"/>
</dbReference>
<keyword id="KW-0028">Amino-acid biosynthesis</keyword>
<keyword id="KW-0100">Branched-chain amino acid biosynthesis</keyword>
<keyword id="KW-0460">Magnesium</keyword>
<keyword id="KW-0479">Metal-binding</keyword>
<keyword id="KW-0521">NADP</keyword>
<keyword id="KW-0560">Oxidoreductase</keyword>
<organism>
    <name type="scientific">Saccharolobus islandicus (strain Y.G.57.14 / Yellowstone #1)</name>
    <name type="common">Sulfolobus islandicus</name>
    <dbReference type="NCBI Taxonomy" id="439386"/>
    <lineage>
        <taxon>Archaea</taxon>
        <taxon>Thermoproteota</taxon>
        <taxon>Thermoprotei</taxon>
        <taxon>Sulfolobales</taxon>
        <taxon>Sulfolobaceae</taxon>
        <taxon>Saccharolobus</taxon>
    </lineage>
</organism>
<comment type="function">
    <text evidence="1">Involved in the biosynthesis of branched-chain amino acids (BCAA). Catalyzes an alkyl-migration followed by a ketol-acid reduction of (S)-2-acetolactate (S2AL) to yield (R)-2,3-dihydroxy-isovalerate. In the isomerase reaction, S2AL is rearranged via a Mg-dependent methyl migration to produce 3-hydroxy-3-methyl-2-ketobutyrate (HMKB). In the reductase reaction, this 2-ketoacid undergoes a metal-dependent reduction by NADPH to yield (R)-2,3-dihydroxy-isovalerate.</text>
</comment>
<comment type="catalytic activity">
    <reaction evidence="1">
        <text>(2R)-2,3-dihydroxy-3-methylbutanoate + NADP(+) = (2S)-2-acetolactate + NADPH + H(+)</text>
        <dbReference type="Rhea" id="RHEA:22068"/>
        <dbReference type="ChEBI" id="CHEBI:15378"/>
        <dbReference type="ChEBI" id="CHEBI:49072"/>
        <dbReference type="ChEBI" id="CHEBI:57783"/>
        <dbReference type="ChEBI" id="CHEBI:58349"/>
        <dbReference type="ChEBI" id="CHEBI:58476"/>
        <dbReference type="EC" id="1.1.1.86"/>
    </reaction>
</comment>
<comment type="catalytic activity">
    <reaction evidence="1">
        <text>(2R,3R)-2,3-dihydroxy-3-methylpentanoate + NADP(+) = (S)-2-ethyl-2-hydroxy-3-oxobutanoate + NADPH + H(+)</text>
        <dbReference type="Rhea" id="RHEA:13493"/>
        <dbReference type="ChEBI" id="CHEBI:15378"/>
        <dbReference type="ChEBI" id="CHEBI:49256"/>
        <dbReference type="ChEBI" id="CHEBI:49258"/>
        <dbReference type="ChEBI" id="CHEBI:57783"/>
        <dbReference type="ChEBI" id="CHEBI:58349"/>
        <dbReference type="EC" id="1.1.1.86"/>
    </reaction>
</comment>
<comment type="cofactor">
    <cofactor evidence="1">
        <name>Mg(2+)</name>
        <dbReference type="ChEBI" id="CHEBI:18420"/>
    </cofactor>
    <text evidence="1">Binds 2 magnesium ions per subunit.</text>
</comment>
<comment type="pathway">
    <text evidence="1">Amino-acid biosynthesis; L-isoleucine biosynthesis; L-isoleucine from 2-oxobutanoate: step 2/4.</text>
</comment>
<comment type="pathway">
    <text evidence="1">Amino-acid biosynthesis; L-valine biosynthesis; L-valine from pyruvate: step 2/4.</text>
</comment>
<comment type="similarity">
    <text evidence="1">Belongs to the ketol-acid reductoisomerase family.</text>
</comment>
<reference key="1">
    <citation type="journal article" date="2009" name="Proc. Natl. Acad. Sci. U.S.A.">
        <title>Biogeography of the Sulfolobus islandicus pan-genome.</title>
        <authorList>
            <person name="Reno M.L."/>
            <person name="Held N.L."/>
            <person name="Fields C.J."/>
            <person name="Burke P.V."/>
            <person name="Whitaker R.J."/>
        </authorList>
    </citation>
    <scope>NUCLEOTIDE SEQUENCE [LARGE SCALE GENOMIC DNA]</scope>
    <source>
        <strain>Y.G.57.14 / Yellowstone #1</strain>
    </source>
</reference>
<gene>
    <name evidence="1" type="primary">ilvC</name>
    <name type="ordered locus">YG5714_1559</name>
</gene>
<protein>
    <recommendedName>
        <fullName evidence="1">Ketol-acid reductoisomerase (NADP(+))</fullName>
        <shortName evidence="1">KARI</shortName>
        <ecNumber evidence="1">1.1.1.86</ecNumber>
    </recommendedName>
    <alternativeName>
        <fullName evidence="1">Acetohydroxy-acid isomeroreductase</fullName>
        <shortName evidence="1">AHIR</shortName>
    </alternativeName>
    <alternativeName>
        <fullName evidence="1">Alpha-keto-beta-hydroxylacyl reductoisomerase</fullName>
    </alternativeName>
    <alternativeName>
        <fullName evidence="1">Ketol-acid reductoisomerase type 1</fullName>
    </alternativeName>
    <alternativeName>
        <fullName evidence="1">Ketol-acid reductoisomerase type I</fullName>
    </alternativeName>
</protein>
<accession>C3NET2</accession>
<proteinExistence type="inferred from homology"/>